<organism>
    <name type="scientific">Streptococcus pyogenes serotype M1</name>
    <dbReference type="NCBI Taxonomy" id="301447"/>
    <lineage>
        <taxon>Bacteria</taxon>
        <taxon>Bacillati</taxon>
        <taxon>Bacillota</taxon>
        <taxon>Bacilli</taxon>
        <taxon>Lactobacillales</taxon>
        <taxon>Streptococcaceae</taxon>
        <taxon>Streptococcus</taxon>
    </lineage>
</organism>
<dbReference type="EC" id="6.1.1.12" evidence="1"/>
<dbReference type="EMBL" id="AE004092">
    <property type="protein sequence ID" value="AAK34793.1"/>
    <property type="molecule type" value="Genomic_DNA"/>
</dbReference>
<dbReference type="EMBL" id="CP000017">
    <property type="protein sequence ID" value="AAZ52431.1"/>
    <property type="molecule type" value="Genomic_DNA"/>
</dbReference>
<dbReference type="RefSeq" id="NP_270072.1">
    <property type="nucleotide sequence ID" value="NC_002737.2"/>
</dbReference>
<dbReference type="SMR" id="Q99XL0"/>
<dbReference type="PaxDb" id="1314-HKU360_01926"/>
<dbReference type="KEGG" id="spy:SPy_2156"/>
<dbReference type="KEGG" id="spz:M5005_Spy1813"/>
<dbReference type="PATRIC" id="fig|160490.10.peg.1868"/>
<dbReference type="HOGENOM" id="CLU_014330_3_2_9"/>
<dbReference type="OMA" id="LCGWVDR"/>
<dbReference type="Proteomes" id="UP000000750">
    <property type="component" value="Chromosome"/>
</dbReference>
<dbReference type="GO" id="GO:0005737">
    <property type="term" value="C:cytoplasm"/>
    <property type="evidence" value="ECO:0007669"/>
    <property type="project" value="UniProtKB-SubCell"/>
</dbReference>
<dbReference type="GO" id="GO:0004815">
    <property type="term" value="F:aspartate-tRNA ligase activity"/>
    <property type="evidence" value="ECO:0007669"/>
    <property type="project" value="UniProtKB-UniRule"/>
</dbReference>
<dbReference type="GO" id="GO:0005524">
    <property type="term" value="F:ATP binding"/>
    <property type="evidence" value="ECO:0007669"/>
    <property type="project" value="UniProtKB-UniRule"/>
</dbReference>
<dbReference type="GO" id="GO:0140096">
    <property type="term" value="F:catalytic activity, acting on a protein"/>
    <property type="evidence" value="ECO:0007669"/>
    <property type="project" value="UniProtKB-ARBA"/>
</dbReference>
<dbReference type="GO" id="GO:0003676">
    <property type="term" value="F:nucleic acid binding"/>
    <property type="evidence" value="ECO:0007669"/>
    <property type="project" value="InterPro"/>
</dbReference>
<dbReference type="GO" id="GO:0016740">
    <property type="term" value="F:transferase activity"/>
    <property type="evidence" value="ECO:0007669"/>
    <property type="project" value="UniProtKB-ARBA"/>
</dbReference>
<dbReference type="GO" id="GO:0006422">
    <property type="term" value="P:aspartyl-tRNA aminoacylation"/>
    <property type="evidence" value="ECO:0007669"/>
    <property type="project" value="UniProtKB-UniRule"/>
</dbReference>
<dbReference type="CDD" id="cd00777">
    <property type="entry name" value="AspRS_core"/>
    <property type="match status" value="1"/>
</dbReference>
<dbReference type="CDD" id="cd04317">
    <property type="entry name" value="EcAspRS_like_N"/>
    <property type="match status" value="1"/>
</dbReference>
<dbReference type="Gene3D" id="3.30.930.10">
    <property type="entry name" value="Bira Bifunctional Protein, Domain 2"/>
    <property type="match status" value="1"/>
</dbReference>
<dbReference type="Gene3D" id="3.30.1360.30">
    <property type="entry name" value="GAD-like domain"/>
    <property type="match status" value="1"/>
</dbReference>
<dbReference type="Gene3D" id="2.40.50.140">
    <property type="entry name" value="Nucleic acid-binding proteins"/>
    <property type="match status" value="1"/>
</dbReference>
<dbReference type="HAMAP" id="MF_00044">
    <property type="entry name" value="Asp_tRNA_synth_type1"/>
    <property type="match status" value="1"/>
</dbReference>
<dbReference type="InterPro" id="IPR004364">
    <property type="entry name" value="Aa-tRNA-synt_II"/>
</dbReference>
<dbReference type="InterPro" id="IPR006195">
    <property type="entry name" value="aa-tRNA-synth_II"/>
</dbReference>
<dbReference type="InterPro" id="IPR045864">
    <property type="entry name" value="aa-tRNA-synth_II/BPL/LPL"/>
</dbReference>
<dbReference type="InterPro" id="IPR004524">
    <property type="entry name" value="Asp-tRNA-ligase_1"/>
</dbReference>
<dbReference type="InterPro" id="IPR047089">
    <property type="entry name" value="Asp-tRNA-ligase_1_N"/>
</dbReference>
<dbReference type="InterPro" id="IPR002312">
    <property type="entry name" value="Asp/Asn-tRNA-synth_IIb"/>
</dbReference>
<dbReference type="InterPro" id="IPR047090">
    <property type="entry name" value="AspRS_core"/>
</dbReference>
<dbReference type="InterPro" id="IPR004115">
    <property type="entry name" value="GAD-like_sf"/>
</dbReference>
<dbReference type="InterPro" id="IPR029351">
    <property type="entry name" value="GAD_dom"/>
</dbReference>
<dbReference type="InterPro" id="IPR012340">
    <property type="entry name" value="NA-bd_OB-fold"/>
</dbReference>
<dbReference type="InterPro" id="IPR004365">
    <property type="entry name" value="NA-bd_OB_tRNA"/>
</dbReference>
<dbReference type="NCBIfam" id="TIGR00459">
    <property type="entry name" value="aspS_bact"/>
    <property type="match status" value="1"/>
</dbReference>
<dbReference type="NCBIfam" id="NF001750">
    <property type="entry name" value="PRK00476.1"/>
    <property type="match status" value="1"/>
</dbReference>
<dbReference type="PANTHER" id="PTHR22594:SF5">
    <property type="entry name" value="ASPARTATE--TRNA LIGASE, MITOCHONDRIAL"/>
    <property type="match status" value="1"/>
</dbReference>
<dbReference type="PANTHER" id="PTHR22594">
    <property type="entry name" value="ASPARTYL/LYSYL-TRNA SYNTHETASE"/>
    <property type="match status" value="1"/>
</dbReference>
<dbReference type="Pfam" id="PF02938">
    <property type="entry name" value="GAD"/>
    <property type="match status" value="1"/>
</dbReference>
<dbReference type="Pfam" id="PF00152">
    <property type="entry name" value="tRNA-synt_2"/>
    <property type="match status" value="1"/>
</dbReference>
<dbReference type="Pfam" id="PF01336">
    <property type="entry name" value="tRNA_anti-codon"/>
    <property type="match status" value="1"/>
</dbReference>
<dbReference type="PRINTS" id="PR01042">
    <property type="entry name" value="TRNASYNTHASP"/>
</dbReference>
<dbReference type="SUPFAM" id="SSF55681">
    <property type="entry name" value="Class II aaRS and biotin synthetases"/>
    <property type="match status" value="1"/>
</dbReference>
<dbReference type="SUPFAM" id="SSF55261">
    <property type="entry name" value="GAD domain-like"/>
    <property type="match status" value="1"/>
</dbReference>
<dbReference type="SUPFAM" id="SSF50249">
    <property type="entry name" value="Nucleic acid-binding proteins"/>
    <property type="match status" value="1"/>
</dbReference>
<dbReference type="PROSITE" id="PS50862">
    <property type="entry name" value="AA_TRNA_LIGASE_II"/>
    <property type="match status" value="1"/>
</dbReference>
<name>SYD_STRP1</name>
<comment type="function">
    <text evidence="1">Catalyzes the attachment of L-aspartate to tRNA(Asp) in a two-step reaction: L-aspartate is first activated by ATP to form Asp-AMP and then transferred to the acceptor end of tRNA(Asp).</text>
</comment>
<comment type="catalytic activity">
    <reaction evidence="1">
        <text>tRNA(Asp) + L-aspartate + ATP = L-aspartyl-tRNA(Asp) + AMP + diphosphate</text>
        <dbReference type="Rhea" id="RHEA:19649"/>
        <dbReference type="Rhea" id="RHEA-COMP:9660"/>
        <dbReference type="Rhea" id="RHEA-COMP:9678"/>
        <dbReference type="ChEBI" id="CHEBI:29991"/>
        <dbReference type="ChEBI" id="CHEBI:30616"/>
        <dbReference type="ChEBI" id="CHEBI:33019"/>
        <dbReference type="ChEBI" id="CHEBI:78442"/>
        <dbReference type="ChEBI" id="CHEBI:78516"/>
        <dbReference type="ChEBI" id="CHEBI:456215"/>
        <dbReference type="EC" id="6.1.1.12"/>
    </reaction>
</comment>
<comment type="subunit">
    <text evidence="1">Homodimer.</text>
</comment>
<comment type="subcellular location">
    <subcellularLocation>
        <location evidence="1">Cytoplasm</location>
    </subcellularLocation>
</comment>
<comment type="similarity">
    <text evidence="1">Belongs to the class-II aminoacyl-tRNA synthetase family. Type 1 subfamily.</text>
</comment>
<keyword id="KW-0030">Aminoacyl-tRNA synthetase</keyword>
<keyword id="KW-0067">ATP-binding</keyword>
<keyword id="KW-0963">Cytoplasm</keyword>
<keyword id="KW-0436">Ligase</keyword>
<keyword id="KW-0547">Nucleotide-binding</keyword>
<keyword id="KW-0648">Protein biosynthesis</keyword>
<keyword id="KW-1185">Reference proteome</keyword>
<sequence length="582" mass="66028">MKRSMYAGRVREEHIGTTITLKGWVSRRRDLGGLIFIDLRDREGVMQLVINPEEVSSDVMATAERLRSEYVIEVEGFVEARQQANDKLATGMVELKVSALTILNTAKTTPFEIKDDVEVSDDTRLRYRYLDLRRPEMLENFKLRAKVTHSIRNYLDDLEFIDVETPMLTKSTPEGARDYLVPSRVSQGHFYALPQSPQITKQLLMNAGFDRYYQIVKCFRDEDLRGDRQPEFTQVDLETSFLSEQEIQDIVEGMIAKVMKETKEIDVTLPFPRMSYDVAMNSYGSDKPDTRFEMLLQDLTVTVKGNDFKVFSEAPAVKAIVVKGNADRYSRKDIDKLTEFAKQFGAKGLAWVKVTDGQLAGPVAKFLTAIETELSSQLKLAENDLVLFVADTLEVANNTLGALRNRIAKDLDMIDQSQFNFLWVVDWPMFEWSEEEGRYMSAHHPFTLPTPESAHELEGDLAKVRAIAYDIVLNGYELGGGSLRINQKEMQERMFKALGFTADEANDQFGFLLEAMDYGFPPHGGLAIGLDRFVMLLAGKDNIREVIAFPKNNKASDPMTQAPSLVSENQLEELSLQIESHD</sequence>
<reference key="1">
    <citation type="journal article" date="2001" name="Proc. Natl. Acad. Sci. U.S.A.">
        <title>Complete genome sequence of an M1 strain of Streptococcus pyogenes.</title>
        <authorList>
            <person name="Ferretti J.J."/>
            <person name="McShan W.M."/>
            <person name="Ajdic D.J."/>
            <person name="Savic D.J."/>
            <person name="Savic G."/>
            <person name="Lyon K."/>
            <person name="Primeaux C."/>
            <person name="Sezate S."/>
            <person name="Suvorov A.N."/>
            <person name="Kenton S."/>
            <person name="Lai H.S."/>
            <person name="Lin S.P."/>
            <person name="Qian Y."/>
            <person name="Jia H.G."/>
            <person name="Najar F.Z."/>
            <person name="Ren Q."/>
            <person name="Zhu H."/>
            <person name="Song L."/>
            <person name="White J."/>
            <person name="Yuan X."/>
            <person name="Clifton S.W."/>
            <person name="Roe B.A."/>
            <person name="McLaughlin R.E."/>
        </authorList>
    </citation>
    <scope>NUCLEOTIDE SEQUENCE [LARGE SCALE GENOMIC DNA]</scope>
    <source>
        <strain>ATCC 700294 / SF370 / Serotype M1</strain>
    </source>
</reference>
<reference key="2">
    <citation type="journal article" date="2005" name="J. Infect. Dis.">
        <title>Evolutionary origin and emergence of a highly successful clone of serotype M1 group A Streptococcus involved multiple horizontal gene transfer events.</title>
        <authorList>
            <person name="Sumby P."/>
            <person name="Porcella S.F."/>
            <person name="Madrigal A.G."/>
            <person name="Barbian K.D."/>
            <person name="Virtaneva K."/>
            <person name="Ricklefs S.M."/>
            <person name="Sturdevant D.E."/>
            <person name="Graham M.R."/>
            <person name="Vuopio-Varkila J."/>
            <person name="Hoe N.P."/>
            <person name="Musser J.M."/>
        </authorList>
    </citation>
    <scope>NUCLEOTIDE SEQUENCE [LARGE SCALE GENOMIC DNA]</scope>
    <source>
        <strain>ATCC BAA-947 / MGAS5005 / Serotype M1</strain>
    </source>
</reference>
<gene>
    <name evidence="1" type="primary">aspS</name>
    <name type="ordered locus">SPy_2156</name>
    <name type="ordered locus">M5005_Spy1813</name>
</gene>
<accession>Q99XL0</accession>
<accession>Q48W44</accession>
<proteinExistence type="inferred from homology"/>
<evidence type="ECO:0000255" key="1">
    <source>
        <dbReference type="HAMAP-Rule" id="MF_00044"/>
    </source>
</evidence>
<evidence type="ECO:0000305" key="2"/>
<feature type="chain" id="PRO_0000110957" description="Aspartate--tRNA ligase">
    <location>
        <begin position="1"/>
        <end position="582"/>
    </location>
</feature>
<feature type="region of interest" description="Aspartate" evidence="1">
    <location>
        <begin position="198"/>
        <end position="201"/>
    </location>
</feature>
<feature type="binding site" evidence="1">
    <location>
        <position position="174"/>
    </location>
    <ligand>
        <name>L-aspartate</name>
        <dbReference type="ChEBI" id="CHEBI:29991"/>
    </ligand>
</feature>
<feature type="binding site" evidence="1">
    <location>
        <begin position="220"/>
        <end position="222"/>
    </location>
    <ligand>
        <name>ATP</name>
        <dbReference type="ChEBI" id="CHEBI:30616"/>
    </ligand>
</feature>
<feature type="binding site" evidence="1">
    <location>
        <position position="220"/>
    </location>
    <ligand>
        <name>L-aspartate</name>
        <dbReference type="ChEBI" id="CHEBI:29991"/>
    </ligand>
</feature>
<feature type="binding site" evidence="1">
    <location>
        <position position="229"/>
    </location>
    <ligand>
        <name>ATP</name>
        <dbReference type="ChEBI" id="CHEBI:30616"/>
    </ligand>
</feature>
<feature type="binding site" evidence="1">
    <location>
        <position position="443"/>
    </location>
    <ligand>
        <name>L-aspartate</name>
        <dbReference type="ChEBI" id="CHEBI:29991"/>
    </ligand>
</feature>
<feature type="binding site" evidence="1">
    <location>
        <position position="477"/>
    </location>
    <ligand>
        <name>ATP</name>
        <dbReference type="ChEBI" id="CHEBI:30616"/>
    </ligand>
</feature>
<feature type="binding site" evidence="1">
    <location>
        <position position="484"/>
    </location>
    <ligand>
        <name>L-aspartate</name>
        <dbReference type="ChEBI" id="CHEBI:29991"/>
    </ligand>
</feature>
<feature type="binding site" evidence="1">
    <location>
        <begin position="529"/>
        <end position="532"/>
    </location>
    <ligand>
        <name>ATP</name>
        <dbReference type="ChEBI" id="CHEBI:30616"/>
    </ligand>
</feature>
<feature type="sequence conflict" description="In Ref. 2; AAZ52431." evidence="2" ref="2">
    <original>D</original>
    <variation>N</variation>
    <location>
        <position position="58"/>
    </location>
</feature>
<protein>
    <recommendedName>
        <fullName evidence="1">Aspartate--tRNA ligase</fullName>
        <ecNumber evidence="1">6.1.1.12</ecNumber>
    </recommendedName>
    <alternativeName>
        <fullName evidence="1">Aspartyl-tRNA synthetase</fullName>
        <shortName evidence="1">AspRS</shortName>
    </alternativeName>
</protein>